<name>MALT1_MOUSE</name>
<accession>Q2TBA3</accession>
<accession>Q2TBA2</accession>
<accession>Q811E3</accession>
<accession>Q8BFT0</accession>
<accession>Q8C7N9</accession>
<dbReference type="EC" id="3.4.22.-" evidence="6"/>
<dbReference type="EMBL" id="AK041919">
    <property type="protein sequence ID" value="BAC31096.1"/>
    <property type="molecule type" value="mRNA"/>
</dbReference>
<dbReference type="EMBL" id="AK049821">
    <property type="protein sequence ID" value="BAC33935.1"/>
    <property type="molecule type" value="mRNA"/>
</dbReference>
<dbReference type="EMBL" id="AK085071">
    <property type="protein sequence ID" value="BAC39355.1"/>
    <property type="molecule type" value="mRNA"/>
</dbReference>
<dbReference type="EMBL" id="BC046536">
    <property type="protein sequence ID" value="AAH46536.1"/>
    <property type="molecule type" value="mRNA"/>
</dbReference>
<dbReference type="EMBL" id="BC110487">
    <property type="protein sequence ID" value="AAI10488.1"/>
    <property type="molecule type" value="mRNA"/>
</dbReference>
<dbReference type="EMBL" id="BC110488">
    <property type="protein sequence ID" value="AAI10489.1"/>
    <property type="molecule type" value="mRNA"/>
</dbReference>
<dbReference type="CCDS" id="CCDS29306.1">
    <molecule id="Q2TBA3-2"/>
</dbReference>
<dbReference type="CCDS" id="CCDS89264.1">
    <molecule id="Q2TBA3-1"/>
</dbReference>
<dbReference type="RefSeq" id="NP_001351948.1">
    <molecule id="Q2TBA3-1"/>
    <property type="nucleotide sequence ID" value="NM_001365019.2"/>
</dbReference>
<dbReference type="RefSeq" id="NP_766421.1">
    <molecule id="Q2TBA3-2"/>
    <property type="nucleotide sequence ID" value="NM_172833.4"/>
</dbReference>
<dbReference type="RefSeq" id="XP_006526000.1">
    <property type="nucleotide sequence ID" value="XM_006525937.2"/>
</dbReference>
<dbReference type="PDB" id="3V4L">
    <property type="method" value="X-ray"/>
    <property type="resolution" value="3.15 A"/>
    <property type="chains" value="A=338-729"/>
</dbReference>
<dbReference type="PDBsum" id="3V4L"/>
<dbReference type="SMR" id="Q2TBA3"/>
<dbReference type="BioGRID" id="232195">
    <property type="interactions" value="16"/>
</dbReference>
<dbReference type="CORUM" id="Q2TBA3"/>
<dbReference type="DIP" id="DIP-60308N"/>
<dbReference type="FunCoup" id="Q2TBA3">
    <property type="interactions" value="2060"/>
</dbReference>
<dbReference type="IntAct" id="Q2TBA3">
    <property type="interactions" value="3"/>
</dbReference>
<dbReference type="STRING" id="10090.ENSMUSP00000048376"/>
<dbReference type="MEROPS" id="C14.026"/>
<dbReference type="iPTMnet" id="Q2TBA3"/>
<dbReference type="PhosphoSitePlus" id="Q2TBA3"/>
<dbReference type="PaxDb" id="10090-ENSMUSP00000048376"/>
<dbReference type="PeptideAtlas" id="Q2TBA3"/>
<dbReference type="ProteomicsDB" id="292010">
    <molecule id="Q2TBA3-1"/>
</dbReference>
<dbReference type="ProteomicsDB" id="292011">
    <molecule id="Q2TBA3-2"/>
</dbReference>
<dbReference type="Pumba" id="Q2TBA3"/>
<dbReference type="Antibodypedia" id="1194">
    <property type="antibodies" value="785 antibodies from 44 providers"/>
</dbReference>
<dbReference type="DNASU" id="240354"/>
<dbReference type="Ensembl" id="ENSMUST00000049248.7">
    <molecule id="Q2TBA3-2"/>
    <property type="protein sequence ID" value="ENSMUSP00000048376.6"/>
    <property type="gene ID" value="ENSMUSG00000032688.10"/>
</dbReference>
<dbReference type="Ensembl" id="ENSMUST00000224056.3">
    <molecule id="Q2TBA3-1"/>
    <property type="protein sequence ID" value="ENSMUSP00000153585.2"/>
    <property type="gene ID" value="ENSMUSG00000032688.10"/>
</dbReference>
<dbReference type="GeneID" id="240354"/>
<dbReference type="KEGG" id="mmu:240354"/>
<dbReference type="UCSC" id="uc008fez.1">
    <molecule id="Q2TBA3-2"/>
    <property type="organism name" value="mouse"/>
</dbReference>
<dbReference type="UCSC" id="uc008ffa.1">
    <molecule id="Q2TBA3-1"/>
    <property type="organism name" value="mouse"/>
</dbReference>
<dbReference type="AGR" id="MGI:2445027"/>
<dbReference type="CTD" id="10892"/>
<dbReference type="MGI" id="MGI:2445027">
    <property type="gene designation" value="Malt1"/>
</dbReference>
<dbReference type="VEuPathDB" id="HostDB:ENSMUSG00000032688"/>
<dbReference type="eggNOG" id="ENOG502QUZM">
    <property type="taxonomic scope" value="Eukaryota"/>
</dbReference>
<dbReference type="GeneTree" id="ENSGT00390000018044"/>
<dbReference type="HOGENOM" id="CLU_014796_0_0_1"/>
<dbReference type="InParanoid" id="Q2TBA3"/>
<dbReference type="OMA" id="CLMSDGP"/>
<dbReference type="OrthoDB" id="412369at2759"/>
<dbReference type="PhylomeDB" id="Q2TBA3"/>
<dbReference type="TreeFam" id="TF319744"/>
<dbReference type="Reactome" id="R-MMU-1169091">
    <property type="pathway name" value="Activation of NF-kappaB in B cells"/>
</dbReference>
<dbReference type="Reactome" id="R-MMU-202424">
    <property type="pathway name" value="Downstream TCR signaling"/>
</dbReference>
<dbReference type="Reactome" id="R-MMU-2871837">
    <property type="pathway name" value="FCERI mediated NF-kB activation"/>
</dbReference>
<dbReference type="Reactome" id="R-MMU-5607764">
    <property type="pathway name" value="CLEC7A (Dectin-1) signaling"/>
</dbReference>
<dbReference type="Reactome" id="R-MMU-5660668">
    <property type="pathway name" value="CLEC7A/inflammasome pathway"/>
</dbReference>
<dbReference type="BioGRID-ORCS" id="240354">
    <property type="hits" value="5 hits in 80 CRISPR screens"/>
</dbReference>
<dbReference type="ChiTaRS" id="Malt1">
    <property type="organism name" value="mouse"/>
</dbReference>
<dbReference type="EvolutionaryTrace" id="Q2TBA3"/>
<dbReference type="PRO" id="PR:Q2TBA3"/>
<dbReference type="Proteomes" id="UP000000589">
    <property type="component" value="Chromosome 18"/>
</dbReference>
<dbReference type="RNAct" id="Q2TBA3">
    <property type="molecule type" value="protein"/>
</dbReference>
<dbReference type="Bgee" id="ENSMUSG00000032688">
    <property type="expression patterns" value="Expressed in spleen and 212 other cell types or tissues"/>
</dbReference>
<dbReference type="ExpressionAtlas" id="Q2TBA3">
    <property type="expression patterns" value="baseline and differential"/>
</dbReference>
<dbReference type="GO" id="GO:0032449">
    <property type="term" value="C:CBM complex"/>
    <property type="evidence" value="ECO:0000250"/>
    <property type="project" value="UniProtKB"/>
</dbReference>
<dbReference type="GO" id="GO:0005829">
    <property type="term" value="C:cytosol"/>
    <property type="evidence" value="ECO:0000314"/>
    <property type="project" value="UniProtKB"/>
</dbReference>
<dbReference type="GO" id="GO:0001650">
    <property type="term" value="C:fibrillar center"/>
    <property type="evidence" value="ECO:0007669"/>
    <property type="project" value="Ensembl"/>
</dbReference>
<dbReference type="GO" id="GO:0048471">
    <property type="term" value="C:perinuclear region of cytoplasm"/>
    <property type="evidence" value="ECO:0007669"/>
    <property type="project" value="UniProtKB-SubCell"/>
</dbReference>
<dbReference type="GO" id="GO:0002096">
    <property type="term" value="C:polkadots"/>
    <property type="evidence" value="ECO:0000314"/>
    <property type="project" value="CACAO"/>
</dbReference>
<dbReference type="GO" id="GO:0004197">
    <property type="term" value="F:cysteine-type endopeptidase activity"/>
    <property type="evidence" value="ECO:0007669"/>
    <property type="project" value="InterPro"/>
</dbReference>
<dbReference type="GO" id="GO:0061133">
    <property type="term" value="F:endopeptidase activator activity"/>
    <property type="evidence" value="ECO:0007669"/>
    <property type="project" value="Ensembl"/>
</dbReference>
<dbReference type="GO" id="GO:0004175">
    <property type="term" value="F:endopeptidase activity"/>
    <property type="evidence" value="ECO:0000250"/>
    <property type="project" value="UniProtKB"/>
</dbReference>
<dbReference type="GO" id="GO:0042802">
    <property type="term" value="F:identical protein binding"/>
    <property type="evidence" value="ECO:0007669"/>
    <property type="project" value="Ensembl"/>
</dbReference>
<dbReference type="GO" id="GO:0019209">
    <property type="term" value="F:kinase activator activity"/>
    <property type="evidence" value="ECO:0007669"/>
    <property type="project" value="Ensembl"/>
</dbReference>
<dbReference type="GO" id="GO:0002020">
    <property type="term" value="F:protease binding"/>
    <property type="evidence" value="ECO:0000353"/>
    <property type="project" value="BHF-UCL"/>
</dbReference>
<dbReference type="GO" id="GO:0004842">
    <property type="term" value="F:ubiquitin-protein transferase activity"/>
    <property type="evidence" value="ECO:0007669"/>
    <property type="project" value="Ensembl"/>
</dbReference>
<dbReference type="GO" id="GO:0042113">
    <property type="term" value="P:B cell activation"/>
    <property type="evidence" value="ECO:0000315"/>
    <property type="project" value="MGI"/>
</dbReference>
<dbReference type="GO" id="GO:0001923">
    <property type="term" value="P:B-1 B cell differentiation"/>
    <property type="evidence" value="ECO:0000315"/>
    <property type="project" value="MGI"/>
</dbReference>
<dbReference type="GO" id="GO:0071222">
    <property type="term" value="P:cellular response to lipopolysaccharide"/>
    <property type="evidence" value="ECO:0000270"/>
    <property type="project" value="UniProtKB"/>
</dbReference>
<dbReference type="GO" id="GO:0045087">
    <property type="term" value="P:innate immune response"/>
    <property type="evidence" value="ECO:0000270"/>
    <property type="project" value="UniProtKB"/>
</dbReference>
<dbReference type="GO" id="GO:0031663">
    <property type="term" value="P:lipopolysaccharide-mediated signaling pathway"/>
    <property type="evidence" value="ECO:0000314"/>
    <property type="project" value="UniProtKB"/>
</dbReference>
<dbReference type="GO" id="GO:0051168">
    <property type="term" value="P:nuclear export"/>
    <property type="evidence" value="ECO:0007669"/>
    <property type="project" value="Ensembl"/>
</dbReference>
<dbReference type="GO" id="GO:0043123">
    <property type="term" value="P:positive regulation of canonical NF-kappaB signal transduction"/>
    <property type="evidence" value="ECO:0007669"/>
    <property type="project" value="Ensembl"/>
</dbReference>
<dbReference type="GO" id="GO:0032731">
    <property type="term" value="P:positive regulation of interleukin-1 beta production"/>
    <property type="evidence" value="ECO:0007669"/>
    <property type="project" value="Ensembl"/>
</dbReference>
<dbReference type="GO" id="GO:0032743">
    <property type="term" value="P:positive regulation of interleukin-2 production"/>
    <property type="evidence" value="ECO:0007669"/>
    <property type="project" value="Ensembl"/>
</dbReference>
<dbReference type="GO" id="GO:0050870">
    <property type="term" value="P:positive regulation of T cell activation"/>
    <property type="evidence" value="ECO:0000315"/>
    <property type="project" value="MGI"/>
</dbReference>
<dbReference type="GO" id="GO:0002726">
    <property type="term" value="P:positive regulation of T cell cytokine production"/>
    <property type="evidence" value="ECO:0007669"/>
    <property type="project" value="Ensembl"/>
</dbReference>
<dbReference type="GO" id="GO:2000321">
    <property type="term" value="P:positive regulation of T-helper 17 cell differentiation"/>
    <property type="evidence" value="ECO:0000314"/>
    <property type="project" value="UniProtKB"/>
</dbReference>
<dbReference type="GO" id="GO:0006508">
    <property type="term" value="P:proteolysis"/>
    <property type="evidence" value="ECO:0000314"/>
    <property type="project" value="UniProtKB"/>
</dbReference>
<dbReference type="GO" id="GO:0051603">
    <property type="term" value="P:proteolysis involved in protein catabolic process"/>
    <property type="evidence" value="ECO:0000250"/>
    <property type="project" value="UniProtKB"/>
</dbReference>
<dbReference type="GO" id="GO:0042981">
    <property type="term" value="P:regulation of apoptotic process"/>
    <property type="evidence" value="ECO:0000266"/>
    <property type="project" value="MGI"/>
</dbReference>
<dbReference type="GO" id="GO:0050856">
    <property type="term" value="P:regulation of T cell receptor signaling pathway"/>
    <property type="evidence" value="ECO:0000315"/>
    <property type="project" value="MGI"/>
</dbReference>
<dbReference type="GO" id="GO:0009620">
    <property type="term" value="P:response to fungus"/>
    <property type="evidence" value="ECO:0000315"/>
    <property type="project" value="MGI"/>
</dbReference>
<dbReference type="GO" id="GO:0042098">
    <property type="term" value="P:T cell proliferation"/>
    <property type="evidence" value="ECO:0000315"/>
    <property type="project" value="MGI"/>
</dbReference>
<dbReference type="GO" id="GO:0050852">
    <property type="term" value="P:T cell receptor signaling pathway"/>
    <property type="evidence" value="ECO:0000314"/>
    <property type="project" value="UniProtKB"/>
</dbReference>
<dbReference type="CDD" id="cd08783">
    <property type="entry name" value="Death_MALT1"/>
    <property type="match status" value="1"/>
</dbReference>
<dbReference type="CDD" id="cd00096">
    <property type="entry name" value="Ig"/>
    <property type="match status" value="2"/>
</dbReference>
<dbReference type="FunFam" id="1.10.533.10:FF:000039">
    <property type="entry name" value="Mucosa-associated lymphoid tissue lymphoma translocation protein 1"/>
    <property type="match status" value="1"/>
</dbReference>
<dbReference type="FunFam" id="2.60.40.10:FF:000492">
    <property type="entry name" value="Mucosa-associated lymphoid tissue lymphoma translocation protein 1"/>
    <property type="match status" value="1"/>
</dbReference>
<dbReference type="FunFam" id="2.60.40.3360:FF:000001">
    <property type="entry name" value="Mucosa-associated lymphoid tissue lymphoma translocation protein 1"/>
    <property type="match status" value="1"/>
</dbReference>
<dbReference type="FunFam" id="3.40.50.1460:FF:000004">
    <property type="entry name" value="Mucosa-associated lymphoid tissue lymphoma translocation protein 1"/>
    <property type="match status" value="1"/>
</dbReference>
<dbReference type="FunFam" id="2.60.40.10:FF:000585">
    <property type="entry name" value="mucosa-associated lymphoid tissue lymphoma translocation protein 1"/>
    <property type="match status" value="1"/>
</dbReference>
<dbReference type="Gene3D" id="2.60.40.3360">
    <property type="match status" value="1"/>
</dbReference>
<dbReference type="Gene3D" id="3.40.50.1460">
    <property type="match status" value="1"/>
</dbReference>
<dbReference type="Gene3D" id="1.10.533.10">
    <property type="entry name" value="Death Domain, Fas"/>
    <property type="match status" value="1"/>
</dbReference>
<dbReference type="Gene3D" id="2.60.40.10">
    <property type="entry name" value="Immunoglobulins"/>
    <property type="match status" value="2"/>
</dbReference>
<dbReference type="InterPro" id="IPR029030">
    <property type="entry name" value="Caspase-like_dom_sf"/>
</dbReference>
<dbReference type="InterPro" id="IPR052039">
    <property type="entry name" value="Caspase-related_regulators"/>
</dbReference>
<dbReference type="InterPro" id="IPR011029">
    <property type="entry name" value="DEATH-like_dom_sf"/>
</dbReference>
<dbReference type="InterPro" id="IPR007110">
    <property type="entry name" value="Ig-like_dom"/>
</dbReference>
<dbReference type="InterPro" id="IPR036179">
    <property type="entry name" value="Ig-like_dom_sf"/>
</dbReference>
<dbReference type="InterPro" id="IPR013783">
    <property type="entry name" value="Ig-like_fold"/>
</dbReference>
<dbReference type="InterPro" id="IPR003599">
    <property type="entry name" value="Ig_sub"/>
</dbReference>
<dbReference type="InterPro" id="IPR003598">
    <property type="entry name" value="Ig_sub2"/>
</dbReference>
<dbReference type="InterPro" id="IPR037940">
    <property type="entry name" value="MALT1_Death"/>
</dbReference>
<dbReference type="InterPro" id="IPR041077">
    <property type="entry name" value="MALT1_Ig"/>
</dbReference>
<dbReference type="InterPro" id="IPR033540">
    <property type="entry name" value="MALT1_IG-like_dom_sf"/>
</dbReference>
<dbReference type="InterPro" id="IPR011600">
    <property type="entry name" value="Pept_C14_caspase"/>
</dbReference>
<dbReference type="InterPro" id="IPR001309">
    <property type="entry name" value="Pept_C14_p20"/>
</dbReference>
<dbReference type="PANTHER" id="PTHR22576">
    <property type="entry name" value="MUCOSA ASSOCIATED LYMPHOID TISSUE LYMPHOMA TRANSLOCATION PROTEIN 1/PARACASPASE"/>
    <property type="match status" value="1"/>
</dbReference>
<dbReference type="PANTHER" id="PTHR22576:SF40">
    <property type="entry name" value="MUCOSA-ASSOCIATED LYMPHOID TISSUE LYMPHOMA TRANSLOCATION PROTEIN 1"/>
    <property type="match status" value="1"/>
</dbReference>
<dbReference type="Pfam" id="PF13927">
    <property type="entry name" value="Ig_3"/>
    <property type="match status" value="2"/>
</dbReference>
<dbReference type="Pfam" id="PF18703">
    <property type="entry name" value="MALT1_Ig"/>
    <property type="match status" value="1"/>
</dbReference>
<dbReference type="Pfam" id="PF00656">
    <property type="entry name" value="Peptidase_C14"/>
    <property type="match status" value="1"/>
</dbReference>
<dbReference type="SMART" id="SM00409">
    <property type="entry name" value="IG"/>
    <property type="match status" value="2"/>
</dbReference>
<dbReference type="SMART" id="SM00408">
    <property type="entry name" value="IGc2"/>
    <property type="match status" value="2"/>
</dbReference>
<dbReference type="SUPFAM" id="SSF52129">
    <property type="entry name" value="Caspase-like"/>
    <property type="match status" value="1"/>
</dbReference>
<dbReference type="SUPFAM" id="SSF47986">
    <property type="entry name" value="DEATH domain"/>
    <property type="match status" value="1"/>
</dbReference>
<dbReference type="SUPFAM" id="SSF48726">
    <property type="entry name" value="Immunoglobulin"/>
    <property type="match status" value="2"/>
</dbReference>
<dbReference type="PROSITE" id="PS50208">
    <property type="entry name" value="CASPASE_P20"/>
    <property type="match status" value="1"/>
</dbReference>
<dbReference type="PROSITE" id="PS50835">
    <property type="entry name" value="IG_LIKE"/>
    <property type="match status" value="2"/>
</dbReference>
<reference evidence="9 12" key="1">
    <citation type="journal article" date="2005" name="Science">
        <title>The transcriptional landscape of the mammalian genome.</title>
        <authorList>
            <person name="Carninci P."/>
            <person name="Kasukawa T."/>
            <person name="Katayama S."/>
            <person name="Gough J."/>
            <person name="Frith M.C."/>
            <person name="Maeda N."/>
            <person name="Oyama R."/>
            <person name="Ravasi T."/>
            <person name="Lenhard B."/>
            <person name="Wells C."/>
            <person name="Kodzius R."/>
            <person name="Shimokawa K."/>
            <person name="Bajic V.B."/>
            <person name="Brenner S.E."/>
            <person name="Batalov S."/>
            <person name="Forrest A.R."/>
            <person name="Zavolan M."/>
            <person name="Davis M.J."/>
            <person name="Wilming L.G."/>
            <person name="Aidinis V."/>
            <person name="Allen J.E."/>
            <person name="Ambesi-Impiombato A."/>
            <person name="Apweiler R."/>
            <person name="Aturaliya R.N."/>
            <person name="Bailey T.L."/>
            <person name="Bansal M."/>
            <person name="Baxter L."/>
            <person name="Beisel K.W."/>
            <person name="Bersano T."/>
            <person name="Bono H."/>
            <person name="Chalk A.M."/>
            <person name="Chiu K.P."/>
            <person name="Choudhary V."/>
            <person name="Christoffels A."/>
            <person name="Clutterbuck D.R."/>
            <person name="Crowe M.L."/>
            <person name="Dalla E."/>
            <person name="Dalrymple B.P."/>
            <person name="de Bono B."/>
            <person name="Della Gatta G."/>
            <person name="di Bernardo D."/>
            <person name="Down T."/>
            <person name="Engstrom P."/>
            <person name="Fagiolini M."/>
            <person name="Faulkner G."/>
            <person name="Fletcher C.F."/>
            <person name="Fukushima T."/>
            <person name="Furuno M."/>
            <person name="Futaki S."/>
            <person name="Gariboldi M."/>
            <person name="Georgii-Hemming P."/>
            <person name="Gingeras T.R."/>
            <person name="Gojobori T."/>
            <person name="Green R.E."/>
            <person name="Gustincich S."/>
            <person name="Harbers M."/>
            <person name="Hayashi Y."/>
            <person name="Hensch T.K."/>
            <person name="Hirokawa N."/>
            <person name="Hill D."/>
            <person name="Huminiecki L."/>
            <person name="Iacono M."/>
            <person name="Ikeo K."/>
            <person name="Iwama A."/>
            <person name="Ishikawa T."/>
            <person name="Jakt M."/>
            <person name="Kanapin A."/>
            <person name="Katoh M."/>
            <person name="Kawasawa Y."/>
            <person name="Kelso J."/>
            <person name="Kitamura H."/>
            <person name="Kitano H."/>
            <person name="Kollias G."/>
            <person name="Krishnan S.P."/>
            <person name="Kruger A."/>
            <person name="Kummerfeld S.K."/>
            <person name="Kurochkin I.V."/>
            <person name="Lareau L.F."/>
            <person name="Lazarevic D."/>
            <person name="Lipovich L."/>
            <person name="Liu J."/>
            <person name="Liuni S."/>
            <person name="McWilliam S."/>
            <person name="Madan Babu M."/>
            <person name="Madera M."/>
            <person name="Marchionni L."/>
            <person name="Matsuda H."/>
            <person name="Matsuzawa S."/>
            <person name="Miki H."/>
            <person name="Mignone F."/>
            <person name="Miyake S."/>
            <person name="Morris K."/>
            <person name="Mottagui-Tabar S."/>
            <person name="Mulder N."/>
            <person name="Nakano N."/>
            <person name="Nakauchi H."/>
            <person name="Ng P."/>
            <person name="Nilsson R."/>
            <person name="Nishiguchi S."/>
            <person name="Nishikawa S."/>
            <person name="Nori F."/>
            <person name="Ohara O."/>
            <person name="Okazaki Y."/>
            <person name="Orlando V."/>
            <person name="Pang K.C."/>
            <person name="Pavan W.J."/>
            <person name="Pavesi G."/>
            <person name="Pesole G."/>
            <person name="Petrovsky N."/>
            <person name="Piazza S."/>
            <person name="Reed J."/>
            <person name="Reid J.F."/>
            <person name="Ring B.Z."/>
            <person name="Ringwald M."/>
            <person name="Rost B."/>
            <person name="Ruan Y."/>
            <person name="Salzberg S.L."/>
            <person name="Sandelin A."/>
            <person name="Schneider C."/>
            <person name="Schoenbach C."/>
            <person name="Sekiguchi K."/>
            <person name="Semple C.A."/>
            <person name="Seno S."/>
            <person name="Sessa L."/>
            <person name="Sheng Y."/>
            <person name="Shibata Y."/>
            <person name="Shimada H."/>
            <person name="Shimada K."/>
            <person name="Silva D."/>
            <person name="Sinclair B."/>
            <person name="Sperling S."/>
            <person name="Stupka E."/>
            <person name="Sugiura K."/>
            <person name="Sultana R."/>
            <person name="Takenaka Y."/>
            <person name="Taki K."/>
            <person name="Tammoja K."/>
            <person name="Tan S.L."/>
            <person name="Tang S."/>
            <person name="Taylor M.S."/>
            <person name="Tegner J."/>
            <person name="Teichmann S.A."/>
            <person name="Ueda H.R."/>
            <person name="van Nimwegen E."/>
            <person name="Verardo R."/>
            <person name="Wei C.L."/>
            <person name="Yagi K."/>
            <person name="Yamanishi H."/>
            <person name="Zabarovsky E."/>
            <person name="Zhu S."/>
            <person name="Zimmer A."/>
            <person name="Hide W."/>
            <person name="Bult C."/>
            <person name="Grimmond S.M."/>
            <person name="Teasdale R.D."/>
            <person name="Liu E.T."/>
            <person name="Brusic V."/>
            <person name="Quackenbush J."/>
            <person name="Wahlestedt C."/>
            <person name="Mattick J.S."/>
            <person name="Hume D.A."/>
            <person name="Kai C."/>
            <person name="Sasaki D."/>
            <person name="Tomaru Y."/>
            <person name="Fukuda S."/>
            <person name="Kanamori-Katayama M."/>
            <person name="Suzuki M."/>
            <person name="Aoki J."/>
            <person name="Arakawa T."/>
            <person name="Iida J."/>
            <person name="Imamura K."/>
            <person name="Itoh M."/>
            <person name="Kato T."/>
            <person name="Kawaji H."/>
            <person name="Kawagashira N."/>
            <person name="Kawashima T."/>
            <person name="Kojima M."/>
            <person name="Kondo S."/>
            <person name="Konno H."/>
            <person name="Nakano K."/>
            <person name="Ninomiya N."/>
            <person name="Nishio T."/>
            <person name="Okada M."/>
            <person name="Plessy C."/>
            <person name="Shibata K."/>
            <person name="Shiraki T."/>
            <person name="Suzuki S."/>
            <person name="Tagami M."/>
            <person name="Waki K."/>
            <person name="Watahiki A."/>
            <person name="Okamura-Oho Y."/>
            <person name="Suzuki H."/>
            <person name="Kawai J."/>
            <person name="Hayashizaki Y."/>
        </authorList>
    </citation>
    <scope>NUCLEOTIDE SEQUENCE [LARGE SCALE MRNA] (ISOFORM 2)</scope>
    <scope>NUCLEOTIDE SEQUENCE [LARGE SCALE MRNA] OF 542-832 (ISOFORMS1/2)</scope>
    <source>
        <strain evidence="12">C57BL/6J</strain>
        <tissue evidence="13">Hippocampus</tissue>
        <tissue evidence="14">Lung</tissue>
        <tissue evidence="12">Thymus</tissue>
    </source>
</reference>
<reference evidence="9 11" key="2">
    <citation type="journal article" date="2004" name="Genome Res.">
        <title>The status, quality, and expansion of the NIH full-length cDNA project: the Mammalian Gene Collection (MGC).</title>
        <authorList>
            <consortium name="The MGC Project Team"/>
        </authorList>
    </citation>
    <scope>NUCLEOTIDE SEQUENCE [LARGE SCALE MRNA] (ISOFORMS 1 AND 2)</scope>
    <source>
        <strain evidence="10">Czech II</strain>
        <tissue evidence="10">Mammary gland</tissue>
    </source>
</reference>
<reference key="3">
    <citation type="journal article" date="2014" name="Nat. Immunol.">
        <title>Cleavage of roquin and regnase-1 by the paracaspase MALT1 releases their cooperatively repressed targets to promote T(H)17 differentiation.</title>
        <authorList>
            <person name="Jeltsch K.M."/>
            <person name="Hu D."/>
            <person name="Brenner S."/>
            <person name="Zoeller J."/>
            <person name="Heinz G.A."/>
            <person name="Nagel D."/>
            <person name="Vogel K.U."/>
            <person name="Rehage N."/>
            <person name="Warth S.C."/>
            <person name="Edelmann S.L."/>
            <person name="Gloury R."/>
            <person name="Martin N."/>
            <person name="Lohs C."/>
            <person name="Lech M."/>
            <person name="Stehklein J.E."/>
            <person name="Geerlof A."/>
            <person name="Kremmer E."/>
            <person name="Weber A."/>
            <person name="Anders H.J."/>
            <person name="Schmitz I."/>
            <person name="Schmidt-Supprian M."/>
            <person name="Fu M."/>
            <person name="Holtmann H."/>
            <person name="Krappmann D."/>
            <person name="Ruland J."/>
            <person name="Kallies A."/>
            <person name="Heikenwalder M."/>
            <person name="Heissmeyer V."/>
        </authorList>
    </citation>
    <scope>FUNCTION</scope>
</reference>
<reference key="4">
    <citation type="journal article" date="2012" name="Immunity">
        <title>Syk kinase-coupled C-type lectin receptors engage protein kinase C-delta to elicit Card9 adaptor-mediated innate immunity.</title>
        <authorList>
            <person name="Strasser D."/>
            <person name="Neumann K."/>
            <person name="Bergmann H."/>
            <person name="Marakalala M.J."/>
            <person name="Guler R."/>
            <person name="Rojowska A."/>
            <person name="Hopfner K.P."/>
            <person name="Brombacher F."/>
            <person name="Urlaub H."/>
            <person name="Baier G."/>
            <person name="Brown G.D."/>
            <person name="Leitges M."/>
            <person name="Ruland J."/>
        </authorList>
    </citation>
    <scope>IDENTIFICATION IN A CBM COMPLEX</scope>
</reference>
<organism>
    <name type="scientific">Mus musculus</name>
    <name type="common">Mouse</name>
    <dbReference type="NCBI Taxonomy" id="10090"/>
    <lineage>
        <taxon>Eukaryota</taxon>
        <taxon>Metazoa</taxon>
        <taxon>Chordata</taxon>
        <taxon>Craniata</taxon>
        <taxon>Vertebrata</taxon>
        <taxon>Euteleostomi</taxon>
        <taxon>Mammalia</taxon>
        <taxon>Eutheria</taxon>
        <taxon>Euarchontoglires</taxon>
        <taxon>Glires</taxon>
        <taxon>Rodentia</taxon>
        <taxon>Myomorpha</taxon>
        <taxon>Muroidea</taxon>
        <taxon>Muridae</taxon>
        <taxon>Murinae</taxon>
        <taxon>Mus</taxon>
        <taxon>Mus</taxon>
    </lineage>
</organism>
<protein>
    <recommendedName>
        <fullName>Mucosa-associated lymphoid tissue lymphoma translocation protein 1 homolog</fullName>
        <ecNumber evidence="6">3.4.22.-</ecNumber>
    </recommendedName>
    <alternativeName>
        <fullName>Paracaspase</fullName>
    </alternativeName>
</protein>
<sequence length="832" mass="93216">MSLWGQPLQASPPLAVRQPPTASSGPSTSPPAGATLNRLPEPLLRRLSESLDRAPEGRGWRQLAELAGSRGRLRLSGLDLEQCSLKVLEPEGSPSLCLLKLMGEKGCTVTELSDFLQALEHTEVLPLLNPPGLKITVNPESKAVLAGQFVKLCCRATGHPFVQYQWFKMNKEIPYGNSSELVFNTVHVKDAGFYVCRVNNSSTFEFSQWSQLDVCDVAEVTDSFQGSMDGISESRLQICVEPRSQRLVPGSMLLLQCVAIGSPMPHYQWFKDESPLTHETKKHYTVPYVDIEHEGTYWCHVYNDRDSQDSKKAEVTIGRTDEAVECTEDELNNLGHPDNKEQTGQPLAKDKVALLIGNMSYWEHPKLKAPLVDVYELTNLLRQLDFKVVSLLDLTEYEMCNAVDEFLLLLDKGVYGLLYYAGHGYENFGNSFMVPVDAPNPYRSENCLCVQNILKLMQEKETGLNVFLLDMCRKRNDYDDTIPILDALKVTANIVFGYATCQGAEAFEIQHSGLANGIFMKFLKDRLLEDKKITVLLDEVAEDMGKCHLTKGRQALEIRSSLSEKRALTDPVQGAPCSAEALVRNLQWAKAHELPESMCLKFQCGVHIQLGFAAEFSNVMIIYTSIVHKPPEIIMCDAYVTDFPLDLDIDPKHANKGTPEETGSYLVSKDLPKHCLYTRLSSLQKLKEHLIFTVCLSYQYSGLEDTVEEKQEVNVGKPLIAKLDMHRGLGRKTCFQACRMPDEPYHSSTSTSAGAGHFHSSQDSFHDVYHSHLGNADSGMPPDRCHCSRTPHTFISNYPPHHYCQFGRSNVPVETTDEMPFSFSDRLMISEN</sequence>
<comment type="function">
    <text evidence="1 6">Protease that enhances BCL10-induced activation: acts via formation of CBM complexes that channel adaptive and innate immune signaling downstream of CARD domain-containing proteins (CARD9, CARD11 and CARD14) to activate NF-kappa-B and MAP kinase p38 pathways which stimulate expression of genes encoding pro-inflammatory cytokines and chemokines (By similarity). Mediates BCL10 cleavage: MALT1-dependent BCL10 cleavage plays an important role in T-cell antigen receptor-induced integrin adhesion (By similarity). Involved in the induction of T helper 17 cells (Th17) differentiation (By similarity). Cleaves RC3H1 and ZC3H12A in response to T-cell receptor (TCR) stimulation which releases their cooperatively repressed targets to promote Th17 cell differentiation (PubMed:25282160). Also mediates cleavage of N4BP1 in T-cells following TCR-mediated activation, leading to N4BP1 inactivation. May also have ubiquitin ligase activity: binds to TRAF6, inducing TRAF6 oligomerization and activation of its ligase activity (By similarity).</text>
</comment>
<comment type="subunit">
    <text evidence="1 5">Homooligomer; forms oligomers which bind to TRAF6. Forms a complex with CARD14 and MALT1; resulting in the formation of a CBM (CARD14-BCL10-MALT1) complex. Forms a complex with CARD11 and MALT1; resulting in the formation of a CBM (CARD11-BCL10-MALT1) complex (By similarity). Forms a complex with CARD9 and MALT1; resulting in the formation of a CBM (CARD9-BCL10-MALT1) complex (PubMed:22265677).</text>
</comment>
<comment type="subcellular location">
    <subcellularLocation>
        <location evidence="1">Cytoplasm</location>
        <location evidence="1">Perinuclear region</location>
    </subcellularLocation>
    <subcellularLocation>
        <location evidence="1">Nucleus</location>
    </subcellularLocation>
    <text evidence="1">Shuttles between the nucleus and cytoplasm. Found in perinuclear structures together with BCL10 (By similarity).</text>
</comment>
<comment type="alternative products">
    <event type="alternative splicing"/>
    <isoform>
        <id>Q2TBA3-1</id>
        <name evidence="7">1</name>
        <sequence type="displayed"/>
    </isoform>
    <isoform>
        <id>Q2TBA3-2</id>
        <name evidence="7 8">2</name>
        <sequence type="described" ref="VSP_052279"/>
    </isoform>
</comment>
<comment type="similarity">
    <text evidence="9">Belongs to the peptidase C14B family.</text>
</comment>
<gene>
    <name evidence="15" type="primary">Malt1</name>
</gene>
<evidence type="ECO:0000250" key="1">
    <source>
        <dbReference type="UniProtKB" id="Q9UDY8"/>
    </source>
</evidence>
<evidence type="ECO:0000255" key="2"/>
<evidence type="ECO:0000255" key="3">
    <source>
        <dbReference type="PROSITE-ProRule" id="PRU00114"/>
    </source>
</evidence>
<evidence type="ECO:0000256" key="4">
    <source>
        <dbReference type="SAM" id="MobiDB-lite"/>
    </source>
</evidence>
<evidence type="ECO:0000269" key="5">
    <source>
    </source>
</evidence>
<evidence type="ECO:0000269" key="6">
    <source>
    </source>
</evidence>
<evidence type="ECO:0000303" key="7">
    <source>
    </source>
</evidence>
<evidence type="ECO:0000303" key="8">
    <source>
    </source>
</evidence>
<evidence type="ECO:0000305" key="9"/>
<evidence type="ECO:0000312" key="10">
    <source>
        <dbReference type="EMBL" id="AAH46536.1"/>
    </source>
</evidence>
<evidence type="ECO:0000312" key="11">
    <source>
        <dbReference type="EMBL" id="AAI10488.1"/>
    </source>
</evidence>
<evidence type="ECO:0000312" key="12">
    <source>
        <dbReference type="EMBL" id="BAC31096.1"/>
    </source>
</evidence>
<evidence type="ECO:0000312" key="13">
    <source>
        <dbReference type="EMBL" id="BAC33935.1"/>
    </source>
</evidence>
<evidence type="ECO:0000312" key="14">
    <source>
        <dbReference type="EMBL" id="BAC39355.1"/>
    </source>
</evidence>
<evidence type="ECO:0000312" key="15">
    <source>
        <dbReference type="MGI" id="MGI:2445027"/>
    </source>
</evidence>
<evidence type="ECO:0007829" key="16">
    <source>
        <dbReference type="PDB" id="3V4L"/>
    </source>
</evidence>
<proteinExistence type="evidence at protein level"/>
<keyword id="KW-0002">3D-structure</keyword>
<keyword id="KW-0007">Acetylation</keyword>
<keyword id="KW-0025">Alternative splicing</keyword>
<keyword id="KW-0963">Cytoplasm</keyword>
<keyword id="KW-1015">Disulfide bond</keyword>
<keyword id="KW-0378">Hydrolase</keyword>
<keyword id="KW-0391">Immunity</keyword>
<keyword id="KW-0393">Immunoglobulin domain</keyword>
<keyword id="KW-0539">Nucleus</keyword>
<keyword id="KW-0597">Phosphoprotein</keyword>
<keyword id="KW-0645">Protease</keyword>
<keyword id="KW-1185">Reference proteome</keyword>
<keyword id="KW-0677">Repeat</keyword>
<keyword id="KW-0833">Ubl conjugation pathway</keyword>
<feature type="initiator methionine" description="Removed" evidence="1">
    <location>
        <position position="1"/>
    </location>
</feature>
<feature type="chain" id="PRO_0000272961" description="Mucosa-associated lymphoid tissue lymphoma translocation protein 1 homolog">
    <location>
        <begin position="2"/>
        <end position="832"/>
    </location>
</feature>
<feature type="domain" description="Death" evidence="2">
    <location>
        <begin position="45"/>
        <end position="132"/>
    </location>
</feature>
<feature type="domain" description="Ig-like C2-type 1" evidence="2">
    <location>
        <begin position="131"/>
        <end position="207"/>
    </location>
</feature>
<feature type="domain" description="Ig-like C2-type 2" evidence="2">
    <location>
        <begin position="218"/>
        <end position="314"/>
    </location>
</feature>
<feature type="region of interest" description="Disordered" evidence="4">
    <location>
        <begin position="1"/>
        <end position="39"/>
    </location>
</feature>
<feature type="region of interest" description="Caspase-like" evidence="2">
    <location>
        <begin position="356"/>
        <end position="570"/>
    </location>
</feature>
<feature type="short sequence motif" description="Nuclear export signal" evidence="1">
    <location>
        <begin position="377"/>
        <end position="384"/>
    </location>
</feature>
<feature type="compositionally biased region" description="Low complexity" evidence="4">
    <location>
        <begin position="19"/>
        <end position="39"/>
    </location>
</feature>
<feature type="active site" evidence="2">
    <location>
        <position position="423"/>
    </location>
</feature>
<feature type="active site" evidence="2">
    <location>
        <position position="472"/>
    </location>
</feature>
<feature type="modified residue" description="N-acetylserine" evidence="1">
    <location>
        <position position="2"/>
    </location>
</feature>
<feature type="modified residue" description="Phosphoserine" evidence="1">
    <location>
        <position position="141"/>
    </location>
</feature>
<feature type="disulfide bond" evidence="3">
    <location>
        <begin position="154"/>
        <end position="196"/>
    </location>
</feature>
<feature type="disulfide bond" evidence="3">
    <location>
        <begin position="257"/>
        <end position="299"/>
    </location>
</feature>
<feature type="splice variant" id="VSP_052279" description="In isoform 2." evidence="7 8">
    <location>
        <begin position="318"/>
        <end position="328"/>
    </location>
</feature>
<feature type="sequence conflict" description="In Ref. 2; AAI10489." evidence="9" ref="2">
    <original>P</original>
    <variation>S</variation>
    <location>
        <position position="265"/>
    </location>
</feature>
<feature type="sequence conflict" description="In Ref. 2; AAI10488." evidence="9" ref="2">
    <original>P</original>
    <variation>H</variation>
    <location>
        <position position="576"/>
    </location>
</feature>
<feature type="sequence conflict" description="In Ref. 2; AAH46536." evidence="9" ref="2">
    <original>T</original>
    <variation>A</variation>
    <location>
        <position position="793"/>
    </location>
</feature>
<feature type="strand" evidence="16">
    <location>
        <begin position="351"/>
        <end position="357"/>
    </location>
</feature>
<feature type="strand" evidence="16">
    <location>
        <begin position="362"/>
        <end position="364"/>
    </location>
</feature>
<feature type="helix" evidence="16">
    <location>
        <begin position="369"/>
        <end position="383"/>
    </location>
</feature>
<feature type="strand" evidence="16">
    <location>
        <begin position="387"/>
        <end position="393"/>
    </location>
</feature>
<feature type="helix" evidence="16">
    <location>
        <begin position="396"/>
        <end position="407"/>
    </location>
</feature>
<feature type="strand" evidence="16">
    <location>
        <begin position="415"/>
        <end position="427"/>
    </location>
</feature>
<feature type="strand" evidence="16">
    <location>
        <begin position="430"/>
        <end position="434"/>
    </location>
</feature>
<feature type="turn" evidence="16">
    <location>
        <begin position="444"/>
        <end position="446"/>
    </location>
</feature>
<feature type="strand" evidence="16">
    <location>
        <begin position="447"/>
        <end position="449"/>
    </location>
</feature>
<feature type="helix" evidence="16">
    <location>
        <begin position="450"/>
        <end position="458"/>
    </location>
</feature>
<feature type="turn" evidence="16">
    <location>
        <begin position="459"/>
        <end position="461"/>
    </location>
</feature>
<feature type="strand" evidence="16">
    <location>
        <begin position="463"/>
        <end position="471"/>
    </location>
</feature>
<feature type="strand" evidence="16">
    <location>
        <begin position="494"/>
        <end position="500"/>
    </location>
</feature>
<feature type="strand" evidence="16">
    <location>
        <begin position="507"/>
        <end position="509"/>
    </location>
</feature>
<feature type="strand" evidence="16">
    <location>
        <begin position="512"/>
        <end position="514"/>
    </location>
</feature>
<feature type="helix" evidence="16">
    <location>
        <begin position="518"/>
        <end position="523"/>
    </location>
</feature>
<feature type="turn" evidence="16">
    <location>
        <begin position="524"/>
        <end position="528"/>
    </location>
</feature>
<feature type="helix" evidence="16">
    <location>
        <begin position="533"/>
        <end position="545"/>
    </location>
</feature>
<feature type="turn" evidence="16">
    <location>
        <begin position="548"/>
        <end position="553"/>
    </location>
</feature>
<feature type="strand" evidence="16">
    <location>
        <begin position="557"/>
        <end position="560"/>
    </location>
</feature>
<feature type="helix" evidence="16">
    <location>
        <begin position="579"/>
        <end position="589"/>
    </location>
</feature>
<feature type="strand" evidence="16">
    <location>
        <begin position="598"/>
        <end position="601"/>
    </location>
</feature>
<feature type="strand" evidence="16">
    <location>
        <begin position="607"/>
        <end position="616"/>
    </location>
</feature>
<feature type="strand" evidence="16">
    <location>
        <begin position="619"/>
        <end position="628"/>
    </location>
</feature>
<feature type="strand" evidence="16">
    <location>
        <begin position="633"/>
        <end position="641"/>
    </location>
</feature>
<feature type="helix" evidence="16">
    <location>
        <begin position="645"/>
        <end position="647"/>
    </location>
</feature>
<feature type="helix" evidence="16">
    <location>
        <begin position="651"/>
        <end position="653"/>
    </location>
</feature>
<feature type="strand" evidence="16">
    <location>
        <begin position="654"/>
        <end position="658"/>
    </location>
</feature>
<feature type="helix" evidence="16">
    <location>
        <begin position="659"/>
        <end position="662"/>
    </location>
</feature>
<feature type="turn" evidence="16">
    <location>
        <begin position="668"/>
        <end position="670"/>
    </location>
</feature>
<feature type="strand" evidence="16">
    <location>
        <begin position="675"/>
        <end position="680"/>
    </location>
</feature>
<feature type="helix" evidence="16">
    <location>
        <begin position="683"/>
        <end position="685"/>
    </location>
</feature>
<feature type="strand" evidence="16">
    <location>
        <begin position="690"/>
        <end position="700"/>
    </location>
</feature>
<feature type="strand" evidence="16">
    <location>
        <begin position="707"/>
        <end position="717"/>
    </location>
</feature>
<feature type="helix" evidence="16">
    <location>
        <begin position="719"/>
        <end position="723"/>
    </location>
</feature>